<protein>
    <recommendedName>
        <fullName evidence="1">Selenide, water dikinase</fullName>
        <ecNumber evidence="1">2.7.9.3</ecNumber>
    </recommendedName>
    <alternativeName>
        <fullName evidence="1">Selenium donor protein</fullName>
    </alternativeName>
    <alternativeName>
        <fullName evidence="1">Selenophosphate synthase</fullName>
    </alternativeName>
</protein>
<dbReference type="EC" id="2.7.9.3" evidence="1"/>
<dbReference type="EMBL" id="CP000361">
    <property type="protein sequence ID" value="ABV67767.1"/>
    <property type="molecule type" value="Genomic_DNA"/>
</dbReference>
<dbReference type="RefSeq" id="WP_012013154.1">
    <property type="nucleotide sequence ID" value="NC_009850.1"/>
</dbReference>
<dbReference type="SMR" id="A8EUZ4"/>
<dbReference type="STRING" id="367737.Abu_1513"/>
<dbReference type="GeneID" id="24304988"/>
<dbReference type="KEGG" id="abu:Abu_1513"/>
<dbReference type="eggNOG" id="COG0709">
    <property type="taxonomic scope" value="Bacteria"/>
</dbReference>
<dbReference type="HOGENOM" id="CLU_032859_0_1_7"/>
<dbReference type="Proteomes" id="UP000001136">
    <property type="component" value="Chromosome"/>
</dbReference>
<dbReference type="GO" id="GO:0005737">
    <property type="term" value="C:cytoplasm"/>
    <property type="evidence" value="ECO:0007669"/>
    <property type="project" value="TreeGrafter"/>
</dbReference>
<dbReference type="GO" id="GO:0005524">
    <property type="term" value="F:ATP binding"/>
    <property type="evidence" value="ECO:0007669"/>
    <property type="project" value="UniProtKB-UniRule"/>
</dbReference>
<dbReference type="GO" id="GO:0000287">
    <property type="term" value="F:magnesium ion binding"/>
    <property type="evidence" value="ECO:0007669"/>
    <property type="project" value="UniProtKB-UniRule"/>
</dbReference>
<dbReference type="GO" id="GO:0004756">
    <property type="term" value="F:selenide, water dikinase activity"/>
    <property type="evidence" value="ECO:0007669"/>
    <property type="project" value="UniProtKB-UniRule"/>
</dbReference>
<dbReference type="GO" id="GO:0016260">
    <property type="term" value="P:selenocysteine biosynthetic process"/>
    <property type="evidence" value="ECO:0007669"/>
    <property type="project" value="InterPro"/>
</dbReference>
<dbReference type="CDD" id="cd02195">
    <property type="entry name" value="SelD"/>
    <property type="match status" value="1"/>
</dbReference>
<dbReference type="Gene3D" id="3.90.650.10">
    <property type="entry name" value="PurM-like C-terminal domain"/>
    <property type="match status" value="1"/>
</dbReference>
<dbReference type="Gene3D" id="3.30.1330.10">
    <property type="entry name" value="PurM-like, N-terminal domain"/>
    <property type="match status" value="1"/>
</dbReference>
<dbReference type="HAMAP" id="MF_00625">
    <property type="entry name" value="SelD"/>
    <property type="match status" value="1"/>
</dbReference>
<dbReference type="InterPro" id="IPR010918">
    <property type="entry name" value="PurM-like_C_dom"/>
</dbReference>
<dbReference type="InterPro" id="IPR036676">
    <property type="entry name" value="PurM-like_C_sf"/>
</dbReference>
<dbReference type="InterPro" id="IPR016188">
    <property type="entry name" value="PurM-like_N"/>
</dbReference>
<dbReference type="InterPro" id="IPR036921">
    <property type="entry name" value="PurM-like_N_sf"/>
</dbReference>
<dbReference type="InterPro" id="IPR023061">
    <property type="entry name" value="SelD_I"/>
</dbReference>
<dbReference type="InterPro" id="IPR004536">
    <property type="entry name" value="SPS/SelD"/>
</dbReference>
<dbReference type="NCBIfam" id="NF002098">
    <property type="entry name" value="PRK00943.1"/>
    <property type="match status" value="1"/>
</dbReference>
<dbReference type="NCBIfam" id="TIGR00476">
    <property type="entry name" value="selD"/>
    <property type="match status" value="1"/>
</dbReference>
<dbReference type="PANTHER" id="PTHR10256:SF0">
    <property type="entry name" value="INACTIVE SELENIDE, WATER DIKINASE-LIKE PROTEIN-RELATED"/>
    <property type="match status" value="1"/>
</dbReference>
<dbReference type="PANTHER" id="PTHR10256">
    <property type="entry name" value="SELENIDE, WATER DIKINASE"/>
    <property type="match status" value="1"/>
</dbReference>
<dbReference type="Pfam" id="PF00586">
    <property type="entry name" value="AIRS"/>
    <property type="match status" value="1"/>
</dbReference>
<dbReference type="Pfam" id="PF02769">
    <property type="entry name" value="AIRS_C"/>
    <property type="match status" value="1"/>
</dbReference>
<dbReference type="PIRSF" id="PIRSF036407">
    <property type="entry name" value="Selenphspht_syn"/>
    <property type="match status" value="1"/>
</dbReference>
<dbReference type="SUPFAM" id="SSF56042">
    <property type="entry name" value="PurM C-terminal domain-like"/>
    <property type="match status" value="1"/>
</dbReference>
<dbReference type="SUPFAM" id="SSF55326">
    <property type="entry name" value="PurM N-terminal domain-like"/>
    <property type="match status" value="1"/>
</dbReference>
<accession>A8EUZ4</accession>
<proteinExistence type="inferred from homology"/>
<organism>
    <name type="scientific">Aliarcobacter butzleri (strain RM4018)</name>
    <name type="common">Arcobacter butzleri</name>
    <dbReference type="NCBI Taxonomy" id="367737"/>
    <lineage>
        <taxon>Bacteria</taxon>
        <taxon>Pseudomonadati</taxon>
        <taxon>Campylobacterota</taxon>
        <taxon>Epsilonproteobacteria</taxon>
        <taxon>Campylobacterales</taxon>
        <taxon>Arcobacteraceae</taxon>
        <taxon>Aliarcobacter</taxon>
    </lineage>
</organism>
<comment type="function">
    <text evidence="1">Synthesizes selenophosphate from selenide and ATP.</text>
</comment>
<comment type="catalytic activity">
    <reaction evidence="1">
        <text>hydrogenselenide + ATP + H2O = selenophosphate + AMP + phosphate + 2 H(+)</text>
        <dbReference type="Rhea" id="RHEA:18737"/>
        <dbReference type="ChEBI" id="CHEBI:15377"/>
        <dbReference type="ChEBI" id="CHEBI:15378"/>
        <dbReference type="ChEBI" id="CHEBI:16144"/>
        <dbReference type="ChEBI" id="CHEBI:29317"/>
        <dbReference type="ChEBI" id="CHEBI:30616"/>
        <dbReference type="ChEBI" id="CHEBI:43474"/>
        <dbReference type="ChEBI" id="CHEBI:456215"/>
        <dbReference type="EC" id="2.7.9.3"/>
    </reaction>
</comment>
<comment type="cofactor">
    <cofactor evidence="1">
        <name>Mg(2+)</name>
        <dbReference type="ChEBI" id="CHEBI:18420"/>
    </cofactor>
    <text evidence="1">Binds 1 Mg(2+) ion per monomer.</text>
</comment>
<comment type="subunit">
    <text evidence="1">Homodimer.</text>
</comment>
<comment type="similarity">
    <text evidence="1">Belongs to the selenophosphate synthase 1 family. Class I subfamily.</text>
</comment>
<name>SELD_ALIB4</name>
<feature type="chain" id="PRO_1000061389" description="Selenide, water dikinase">
    <location>
        <begin position="1"/>
        <end position="345"/>
    </location>
</feature>
<feature type="active site" evidence="1">
    <location>
        <position position="16"/>
    </location>
</feature>
<feature type="binding site" description="in other chain" evidence="1">
    <location>
        <position position="19"/>
    </location>
    <ligand>
        <name>ATP</name>
        <dbReference type="ChEBI" id="CHEBI:30616"/>
        <note>ligand shared between dimeric partners</note>
    </ligand>
</feature>
<feature type="binding site" description="in other chain" evidence="1">
    <location>
        <begin position="45"/>
        <end position="47"/>
    </location>
    <ligand>
        <name>ATP</name>
        <dbReference type="ChEBI" id="CHEBI:30616"/>
        <note>ligand shared between dimeric partners</note>
    </ligand>
</feature>
<feature type="binding site" evidence="1">
    <location>
        <position position="48"/>
    </location>
    <ligand>
        <name>Mg(2+)</name>
        <dbReference type="ChEBI" id="CHEBI:18420"/>
    </ligand>
</feature>
<feature type="binding site" description="in other chain" evidence="1">
    <location>
        <position position="65"/>
    </location>
    <ligand>
        <name>ATP</name>
        <dbReference type="ChEBI" id="CHEBI:30616"/>
        <note>ligand shared between dimeric partners</note>
    </ligand>
</feature>
<feature type="binding site" description="in other chain" evidence="1">
    <location>
        <position position="88"/>
    </location>
    <ligand>
        <name>ATP</name>
        <dbReference type="ChEBI" id="CHEBI:30616"/>
        <note>ligand shared between dimeric partners</note>
    </ligand>
</feature>
<feature type="binding site" evidence="1">
    <location>
        <position position="88"/>
    </location>
    <ligand>
        <name>Mg(2+)</name>
        <dbReference type="ChEBI" id="CHEBI:18420"/>
    </ligand>
</feature>
<feature type="binding site" evidence="1">
    <location>
        <begin position="136"/>
        <end position="138"/>
    </location>
    <ligand>
        <name>ATP</name>
        <dbReference type="ChEBI" id="CHEBI:30616"/>
        <note>ligand shared between dimeric partners</note>
    </ligand>
</feature>
<feature type="binding site" evidence="1">
    <location>
        <position position="224"/>
    </location>
    <ligand>
        <name>Mg(2+)</name>
        <dbReference type="ChEBI" id="CHEBI:18420"/>
    </ligand>
</feature>
<feature type="site" description="Important for catalytic activity" evidence="1">
    <location>
        <position position="19"/>
    </location>
</feature>
<gene>
    <name evidence="1" type="primary">selD</name>
    <name type="ordered locus">Abu_1513</name>
</gene>
<sequence>MNNEYKLTKFVQAAGCAAKMGPGDLKQTICHLTPDDERILVGFDTSEDASVYQINESQAIVQTLDFITPVVDDPYIYGQIAAANALSDVFAMGAEVKTAMNIVGFDRKNIPKDALEMILDGGNSKIKECGGVLLGGHTIESPEMYYGLSVTGMIHPNEIIRNNTPKIGHVLVLTKPIGMGILTTAIKRDLLELNLIKDCAKIMASLNYLPSKMMRKYEVSSCTDITGFGLMGHALECTNNSITLNISHNDVPFVKEAFDFASNDVIPGGTRRNMKYVEDKIEFLPNVSDIYKALLCDAQTSGGLLIAMKKDDAKEFIKELEDYSFGYASIIGEVIPRTHKAIIIN</sequence>
<evidence type="ECO:0000255" key="1">
    <source>
        <dbReference type="HAMAP-Rule" id="MF_00625"/>
    </source>
</evidence>
<keyword id="KW-0067">ATP-binding</keyword>
<keyword id="KW-0418">Kinase</keyword>
<keyword id="KW-0460">Magnesium</keyword>
<keyword id="KW-0479">Metal-binding</keyword>
<keyword id="KW-0547">Nucleotide-binding</keyword>
<keyword id="KW-1185">Reference proteome</keyword>
<keyword id="KW-0711">Selenium</keyword>
<keyword id="KW-0808">Transferase</keyword>
<reference key="1">
    <citation type="journal article" date="2007" name="PLoS ONE">
        <title>The complete genome sequence and analysis of the Epsilonproteobacterium Arcobacter butzleri.</title>
        <authorList>
            <person name="Miller W.G."/>
            <person name="Parker C.T."/>
            <person name="Rubenfield M."/>
            <person name="Mendz G.L."/>
            <person name="Woesten M.M.S.M."/>
            <person name="Ussery D.W."/>
            <person name="Stolz J.F."/>
            <person name="Binnewies T.T."/>
            <person name="Hallin P.F."/>
            <person name="Wang G."/>
            <person name="Malek J.A."/>
            <person name="Rogosin A."/>
            <person name="Stanker L.H."/>
            <person name="Mandrell R.E."/>
        </authorList>
    </citation>
    <scope>NUCLEOTIDE SEQUENCE [LARGE SCALE GENOMIC DNA]</scope>
    <source>
        <strain>RM4018</strain>
    </source>
</reference>